<reference key="1">
    <citation type="journal article" date="2002" name="Proc. Natl. Acad. Sci. U.S.A.">
        <title>Extensive mosaic structure revealed by the complete genome sequence of uropathogenic Escherichia coli.</title>
        <authorList>
            <person name="Welch R.A."/>
            <person name="Burland V."/>
            <person name="Plunkett G. III"/>
            <person name="Redford P."/>
            <person name="Roesch P."/>
            <person name="Rasko D."/>
            <person name="Buckles E.L."/>
            <person name="Liou S.-R."/>
            <person name="Boutin A."/>
            <person name="Hackett J."/>
            <person name="Stroud D."/>
            <person name="Mayhew G.F."/>
            <person name="Rose D.J."/>
            <person name="Zhou S."/>
            <person name="Schwartz D.C."/>
            <person name="Perna N.T."/>
            <person name="Mobley H.L.T."/>
            <person name="Donnenberg M.S."/>
            <person name="Blattner F.R."/>
        </authorList>
    </citation>
    <scope>NUCLEOTIDE SEQUENCE [LARGE SCALE GENOMIC DNA]</scope>
    <source>
        <strain>CFT073 / ATCC 700928 / UPEC</strain>
    </source>
</reference>
<dbReference type="EMBL" id="AE014075">
    <property type="protein sequence ID" value="AAN83385.1"/>
    <property type="molecule type" value="Genomic_DNA"/>
</dbReference>
<dbReference type="RefSeq" id="WP_001044513.1">
    <property type="nucleotide sequence ID" value="NZ_CP051263.1"/>
</dbReference>
<dbReference type="SMR" id="P0ACF1"/>
<dbReference type="STRING" id="199310.c4957"/>
<dbReference type="GeneID" id="93777894"/>
<dbReference type="KEGG" id="ecc:c4957"/>
<dbReference type="eggNOG" id="COG0776">
    <property type="taxonomic scope" value="Bacteria"/>
</dbReference>
<dbReference type="HOGENOM" id="CLU_105066_3_1_6"/>
<dbReference type="BioCyc" id="ECOL199310:C4957-MONOMER"/>
<dbReference type="Proteomes" id="UP000001410">
    <property type="component" value="Chromosome"/>
</dbReference>
<dbReference type="GO" id="GO:0005829">
    <property type="term" value="C:cytosol"/>
    <property type="evidence" value="ECO:0007669"/>
    <property type="project" value="TreeGrafter"/>
</dbReference>
<dbReference type="GO" id="GO:0003677">
    <property type="term" value="F:DNA binding"/>
    <property type="evidence" value="ECO:0007669"/>
    <property type="project" value="UniProtKB-KW"/>
</dbReference>
<dbReference type="GO" id="GO:0030527">
    <property type="term" value="F:structural constituent of chromatin"/>
    <property type="evidence" value="ECO:0007669"/>
    <property type="project" value="InterPro"/>
</dbReference>
<dbReference type="GO" id="GO:0030261">
    <property type="term" value="P:chromosome condensation"/>
    <property type="evidence" value="ECO:0007669"/>
    <property type="project" value="UniProtKB-KW"/>
</dbReference>
<dbReference type="CDD" id="cd13831">
    <property type="entry name" value="HU"/>
    <property type="match status" value="1"/>
</dbReference>
<dbReference type="FunFam" id="4.10.520.10:FF:000001">
    <property type="entry name" value="DNA-binding protein HU"/>
    <property type="match status" value="1"/>
</dbReference>
<dbReference type="Gene3D" id="4.10.520.10">
    <property type="entry name" value="IHF-like DNA-binding proteins"/>
    <property type="match status" value="1"/>
</dbReference>
<dbReference type="InterPro" id="IPR000119">
    <property type="entry name" value="Hist_DNA-bd"/>
</dbReference>
<dbReference type="InterPro" id="IPR020816">
    <property type="entry name" value="Histone-like_DNA-bd_CS"/>
</dbReference>
<dbReference type="InterPro" id="IPR010992">
    <property type="entry name" value="IHF-like_DNA-bd_dom_sf"/>
</dbReference>
<dbReference type="NCBIfam" id="NF008023">
    <property type="entry name" value="PRK10753.1"/>
    <property type="match status" value="1"/>
</dbReference>
<dbReference type="PANTHER" id="PTHR33175">
    <property type="entry name" value="DNA-BINDING PROTEIN HU"/>
    <property type="match status" value="1"/>
</dbReference>
<dbReference type="PANTHER" id="PTHR33175:SF12">
    <property type="entry name" value="DNA-BINDING PROTEIN HU-ALPHA"/>
    <property type="match status" value="1"/>
</dbReference>
<dbReference type="Pfam" id="PF00216">
    <property type="entry name" value="Bac_DNA_binding"/>
    <property type="match status" value="1"/>
</dbReference>
<dbReference type="PRINTS" id="PR01727">
    <property type="entry name" value="DNABINDINGHU"/>
</dbReference>
<dbReference type="SMART" id="SM00411">
    <property type="entry name" value="BHL"/>
    <property type="match status" value="1"/>
</dbReference>
<dbReference type="SUPFAM" id="SSF47729">
    <property type="entry name" value="IHF-like DNA-binding proteins"/>
    <property type="match status" value="1"/>
</dbReference>
<dbReference type="PROSITE" id="PS00045">
    <property type="entry name" value="HISTONE_LIKE"/>
    <property type="match status" value="1"/>
</dbReference>
<keyword id="KW-0226">DNA condensation</keyword>
<keyword id="KW-0238">DNA-binding</keyword>
<keyword id="KW-1185">Reference proteome</keyword>
<evidence type="ECO:0000250" key="1"/>
<evidence type="ECO:0000305" key="2"/>
<gene>
    <name type="primary">hupA</name>
    <name type="ordered locus">c4957</name>
</gene>
<sequence length="90" mass="9535">MNKTQLIDVIAEKAELSKTQAKAALESTLAAITESLKEGDAVQLVGFGTFKVNHRAERTGRNPQTGKEIKIAAANVPAFVSGKALKDAVK</sequence>
<proteinExistence type="inferred from homology"/>
<protein>
    <recommendedName>
        <fullName>DNA-binding protein HU-alpha</fullName>
    </recommendedName>
    <alternativeName>
        <fullName>HU-2</fullName>
    </alternativeName>
    <alternativeName>
        <fullName>NS2</fullName>
    </alternativeName>
</protein>
<organism>
    <name type="scientific">Escherichia coli O6:H1 (strain CFT073 / ATCC 700928 / UPEC)</name>
    <dbReference type="NCBI Taxonomy" id="199310"/>
    <lineage>
        <taxon>Bacteria</taxon>
        <taxon>Pseudomonadati</taxon>
        <taxon>Pseudomonadota</taxon>
        <taxon>Gammaproteobacteria</taxon>
        <taxon>Enterobacterales</taxon>
        <taxon>Enterobacteriaceae</taxon>
        <taxon>Escherichia</taxon>
    </lineage>
</organism>
<comment type="function">
    <text evidence="1">Histone-like DNA-binding protein which is capable of wrapping DNA to stabilize it, and thus to prevent its denaturation under extreme environmental conditions.</text>
</comment>
<comment type="subunit">
    <text evidence="1">Heterodimer of an alpha and a beta chain.</text>
</comment>
<comment type="similarity">
    <text evidence="2">Belongs to the bacterial histone-like protein family.</text>
</comment>
<feature type="chain" id="PRO_0000104937" description="DNA-binding protein HU-alpha">
    <location>
        <begin position="1"/>
        <end position="90"/>
    </location>
</feature>
<accession>P0ACF1</accession>
<accession>P02342</accession>
<name>DBHA_ECOL6</name>